<proteinExistence type="evidence at protein level"/>
<gene>
    <name type="primary">glmS</name>
    <name type="ordered locus">MMP1680</name>
</gene>
<keyword id="KW-0032">Aminotransferase</keyword>
<keyword id="KW-0963">Cytoplasm</keyword>
<keyword id="KW-0315">Glutamine amidotransferase</keyword>
<keyword id="KW-1185">Reference proteome</keyword>
<keyword id="KW-0677">Repeat</keyword>
<keyword id="KW-0808">Transferase</keyword>
<sequence length="599" mass="67138">MCGIIGYIGNEKASKILLKGLKRLEYRGYDSCGIATIDDTIKLKKNTGKVLEVSKKENFEDMTGFIGIGHSRWATHGGITKNNAHPHYDCSEKICIAHNGIISNYKELKELLISKGHIFKSETDTEVIPHLIEEEIKDFKEITEKTYINAIQNTIKKLNGTYALLILNQDFPEMLVGVRNESPLILGIKKDECFIGSDISAFLEYTKLAMPLNDRDIVILRKENDEIDIEVLNYGKQVQRDTIELQWDMESAEKEGYEHFMLKEIMEEPVILKNSMKISKLEIENLGKEIEKCDKIYITAMGTSLHAAMVAEYWFSGLNKLVIPIDSSEFLTKGIVDEKTLVIAITQSGETYDTMKAVKYAKEKGAKTATIVNVLGSTATREADITIMMGSGLEIAVCATKTFMSQLVILYRLFIEYGKIIGKNMDIFEKELLNIPNYISKVLDEKENISKIAEELTAKNYLFISKGINLANALEGALKFKEITYLHAEGMSSGFLKHGTISLIDENMDTVALIPPSKSELLNSVLSNVEEIKARNGKIIGISPVEDNLKYSIKVPDVIEEVSPFVYATACQLLAYYKAVDLKRDVDKPRGLAKSVTVE</sequence>
<reference key="1">
    <citation type="journal article" date="2004" name="J. Bacteriol.">
        <title>Complete genome sequence of the genetically tractable hydrogenotrophic methanogen Methanococcus maripaludis.</title>
        <authorList>
            <person name="Hendrickson E.L."/>
            <person name="Kaul R."/>
            <person name="Zhou Y."/>
            <person name="Bovee D."/>
            <person name="Chapman P."/>
            <person name="Chung J."/>
            <person name="Conway de Macario E."/>
            <person name="Dodsworth J.A."/>
            <person name="Gillett W."/>
            <person name="Graham D.E."/>
            <person name="Hackett M."/>
            <person name="Haydock A.K."/>
            <person name="Kang A."/>
            <person name="Land M.L."/>
            <person name="Levy R."/>
            <person name="Lie T.J."/>
            <person name="Major T.A."/>
            <person name="Moore B.C."/>
            <person name="Porat I."/>
            <person name="Palmeiri A."/>
            <person name="Rouse G."/>
            <person name="Saenphimmachak C."/>
            <person name="Soell D."/>
            <person name="Van Dien S."/>
            <person name="Wang T."/>
            <person name="Whitman W.B."/>
            <person name="Xia Q."/>
            <person name="Zhang Y."/>
            <person name="Larimer F.W."/>
            <person name="Olson M.V."/>
            <person name="Leigh J.A."/>
        </authorList>
    </citation>
    <scope>NUCLEOTIDE SEQUENCE [LARGE SCALE GENOMIC DNA]</scope>
    <source>
        <strain>DSM 14266 / JCM 13030 / NBRC 101832 / S2 / LL</strain>
    </source>
</reference>
<reference key="2">
    <citation type="journal article" date="2008" name="J. Bacteriol.">
        <title>Acetamido sugar biosynthesis in the Euryarchaea.</title>
        <authorList>
            <person name="Namboori S.C."/>
            <person name="Graham D.E."/>
        </authorList>
    </citation>
    <scope>FUNCTION</scope>
    <scope>CATALYTIC ACTIVITY</scope>
    <scope>PH DEPENDENCE</scope>
    <scope>SUBUNIT</scope>
    <source>
        <strain>900</strain>
    </source>
</reference>
<feature type="initiator methionine" description="Removed" evidence="1">
    <location>
        <position position="1"/>
    </location>
</feature>
<feature type="chain" id="PRO_0000333235" description="Glutamine--fructose-6-phosphate aminotransferase [isomerizing]">
    <location>
        <begin position="2"/>
        <end position="599"/>
    </location>
</feature>
<feature type="domain" description="Glutamine amidotransferase type-2">
    <location>
        <begin position="2"/>
        <end position="223"/>
    </location>
</feature>
<feature type="domain" description="SIS 1">
    <location>
        <begin position="286"/>
        <end position="423"/>
    </location>
</feature>
<feature type="domain" description="SIS 2">
    <location>
        <begin position="452"/>
        <end position="589"/>
    </location>
</feature>
<feature type="active site" description="Nucleophile; for GATase activity" evidence="1">
    <location>
        <position position="2"/>
    </location>
</feature>
<feature type="active site" description="For Fru-6P isomerization activity" evidence="1">
    <location>
        <position position="594"/>
    </location>
</feature>
<name>GLMS_METMP</name>
<accession>Q6LWM9</accession>
<organism>
    <name type="scientific">Methanococcus maripaludis (strain DSM 14266 / JCM 13030 / NBRC 101832 / S2 / LL)</name>
    <dbReference type="NCBI Taxonomy" id="267377"/>
    <lineage>
        <taxon>Archaea</taxon>
        <taxon>Methanobacteriati</taxon>
        <taxon>Methanobacteriota</taxon>
        <taxon>Methanomada group</taxon>
        <taxon>Methanococci</taxon>
        <taxon>Methanococcales</taxon>
        <taxon>Methanococcaceae</taxon>
        <taxon>Methanococcus</taxon>
    </lineage>
</organism>
<dbReference type="EC" id="2.6.1.16"/>
<dbReference type="EMBL" id="BX950229">
    <property type="protein sequence ID" value="CAF31236.1"/>
    <property type="status" value="ALT_INIT"/>
    <property type="molecule type" value="Genomic_DNA"/>
</dbReference>
<dbReference type="RefSeq" id="WP_048064125.1">
    <property type="nucleotide sequence ID" value="NC_005791.1"/>
</dbReference>
<dbReference type="SMR" id="Q6LWM9"/>
<dbReference type="STRING" id="267377.MMP1680"/>
<dbReference type="EnsemblBacteria" id="CAF31236">
    <property type="protein sequence ID" value="CAF31236"/>
    <property type="gene ID" value="MMP1680"/>
</dbReference>
<dbReference type="GeneID" id="2762284"/>
<dbReference type="KEGG" id="mmp:MMP1680"/>
<dbReference type="PATRIC" id="fig|267377.15.peg.1719"/>
<dbReference type="eggNOG" id="arCOG00057">
    <property type="taxonomic scope" value="Archaea"/>
</dbReference>
<dbReference type="HOGENOM" id="CLU_012520_7_0_2"/>
<dbReference type="OrthoDB" id="372195at2157"/>
<dbReference type="Proteomes" id="UP000000590">
    <property type="component" value="Chromosome"/>
</dbReference>
<dbReference type="GO" id="GO:0005737">
    <property type="term" value="C:cytoplasm"/>
    <property type="evidence" value="ECO:0007669"/>
    <property type="project" value="UniProtKB-SubCell"/>
</dbReference>
<dbReference type="GO" id="GO:0097367">
    <property type="term" value="F:carbohydrate derivative binding"/>
    <property type="evidence" value="ECO:0007669"/>
    <property type="project" value="InterPro"/>
</dbReference>
<dbReference type="GO" id="GO:0004360">
    <property type="term" value="F:glutamine-fructose-6-phosphate transaminase (isomerizing) activity"/>
    <property type="evidence" value="ECO:0000314"/>
    <property type="project" value="CACAO"/>
</dbReference>
<dbReference type="GO" id="GO:0005975">
    <property type="term" value="P:carbohydrate metabolic process"/>
    <property type="evidence" value="ECO:0007669"/>
    <property type="project" value="UniProtKB-UniRule"/>
</dbReference>
<dbReference type="GO" id="GO:0006002">
    <property type="term" value="P:fructose 6-phosphate metabolic process"/>
    <property type="evidence" value="ECO:0007669"/>
    <property type="project" value="TreeGrafter"/>
</dbReference>
<dbReference type="GO" id="GO:0006487">
    <property type="term" value="P:protein N-linked glycosylation"/>
    <property type="evidence" value="ECO:0007669"/>
    <property type="project" value="TreeGrafter"/>
</dbReference>
<dbReference type="GO" id="GO:0006047">
    <property type="term" value="P:UDP-N-acetylglucosamine metabolic process"/>
    <property type="evidence" value="ECO:0007669"/>
    <property type="project" value="TreeGrafter"/>
</dbReference>
<dbReference type="CDD" id="cd00714">
    <property type="entry name" value="GFAT"/>
    <property type="match status" value="1"/>
</dbReference>
<dbReference type="CDD" id="cd05008">
    <property type="entry name" value="SIS_GlmS_GlmD_1"/>
    <property type="match status" value="1"/>
</dbReference>
<dbReference type="CDD" id="cd05009">
    <property type="entry name" value="SIS_GlmS_GlmD_2"/>
    <property type="match status" value="1"/>
</dbReference>
<dbReference type="FunFam" id="3.60.20.10:FF:000006">
    <property type="entry name" value="Glutamine--fructose-6-phosphate aminotransferase [isomerizing]"/>
    <property type="match status" value="1"/>
</dbReference>
<dbReference type="Gene3D" id="3.40.50.10490">
    <property type="entry name" value="Glucose-6-phosphate isomerase like protein, domain 1"/>
    <property type="match status" value="2"/>
</dbReference>
<dbReference type="Gene3D" id="3.60.20.10">
    <property type="entry name" value="Glutamine Phosphoribosylpyrophosphate, subunit 1, domain 1"/>
    <property type="match status" value="1"/>
</dbReference>
<dbReference type="HAMAP" id="MF_00164">
    <property type="entry name" value="GlmS"/>
    <property type="match status" value="1"/>
</dbReference>
<dbReference type="InterPro" id="IPR017932">
    <property type="entry name" value="GATase_2_dom"/>
</dbReference>
<dbReference type="InterPro" id="IPR005855">
    <property type="entry name" value="GFAT"/>
</dbReference>
<dbReference type="InterPro" id="IPR047084">
    <property type="entry name" value="GFAT_N"/>
</dbReference>
<dbReference type="InterPro" id="IPR035466">
    <property type="entry name" value="GlmS/AgaS_SIS"/>
</dbReference>
<dbReference type="InterPro" id="IPR035490">
    <property type="entry name" value="GlmS/FrlB_SIS"/>
</dbReference>
<dbReference type="InterPro" id="IPR029055">
    <property type="entry name" value="Ntn_hydrolases_N"/>
</dbReference>
<dbReference type="InterPro" id="IPR001347">
    <property type="entry name" value="SIS_dom"/>
</dbReference>
<dbReference type="InterPro" id="IPR046348">
    <property type="entry name" value="SIS_dom_sf"/>
</dbReference>
<dbReference type="NCBIfam" id="TIGR01135">
    <property type="entry name" value="glmS"/>
    <property type="match status" value="1"/>
</dbReference>
<dbReference type="NCBIfam" id="NF001484">
    <property type="entry name" value="PRK00331.1"/>
    <property type="match status" value="1"/>
</dbReference>
<dbReference type="PANTHER" id="PTHR10937">
    <property type="entry name" value="GLUCOSAMINE--FRUCTOSE-6-PHOSPHATE AMINOTRANSFERASE, ISOMERIZING"/>
    <property type="match status" value="1"/>
</dbReference>
<dbReference type="PANTHER" id="PTHR10937:SF0">
    <property type="entry name" value="GLUTAMINE--FRUCTOSE-6-PHOSPHATE TRANSAMINASE (ISOMERIZING)"/>
    <property type="match status" value="1"/>
</dbReference>
<dbReference type="Pfam" id="PF13537">
    <property type="entry name" value="GATase_7"/>
    <property type="match status" value="1"/>
</dbReference>
<dbReference type="Pfam" id="PF01380">
    <property type="entry name" value="SIS"/>
    <property type="match status" value="2"/>
</dbReference>
<dbReference type="SUPFAM" id="SSF56235">
    <property type="entry name" value="N-terminal nucleophile aminohydrolases (Ntn hydrolases)"/>
    <property type="match status" value="1"/>
</dbReference>
<dbReference type="SUPFAM" id="SSF53697">
    <property type="entry name" value="SIS domain"/>
    <property type="match status" value="1"/>
</dbReference>
<dbReference type="PROSITE" id="PS51278">
    <property type="entry name" value="GATASE_TYPE_2"/>
    <property type="match status" value="1"/>
</dbReference>
<dbReference type="PROSITE" id="PS51464">
    <property type="entry name" value="SIS"/>
    <property type="match status" value="2"/>
</dbReference>
<protein>
    <recommendedName>
        <fullName>Glutamine--fructose-6-phosphate aminotransferase [isomerizing]</fullName>
        <ecNumber>2.6.1.16</ecNumber>
    </recommendedName>
    <alternativeName>
        <fullName>D-fructose-6-phosphate amidotransferase</fullName>
    </alternativeName>
    <alternativeName>
        <fullName>GFAT</fullName>
    </alternativeName>
    <alternativeName>
        <fullName>Glucosamine-6-phosphate synthase</fullName>
    </alternativeName>
    <alternativeName>
        <fullName>Hexosephosphate aminotransferase</fullName>
    </alternativeName>
    <alternativeName>
        <fullName>L-glutamine--D-fructose-6-phosphate amidotransferase</fullName>
    </alternativeName>
</protein>
<evidence type="ECO:0000250" key="1"/>
<evidence type="ECO:0000269" key="2">
    <source>
    </source>
</evidence>
<evidence type="ECO:0000305" key="3"/>
<comment type="function">
    <text evidence="2">Catalyzes the first step in hexosamine metabolism, converting fructose-6P into glucosamine-6P using glutamine as a nitrogen source.</text>
</comment>
<comment type="catalytic activity">
    <reaction evidence="2">
        <text>D-fructose 6-phosphate + L-glutamine = D-glucosamine 6-phosphate + L-glutamate</text>
        <dbReference type="Rhea" id="RHEA:13237"/>
        <dbReference type="ChEBI" id="CHEBI:29985"/>
        <dbReference type="ChEBI" id="CHEBI:58359"/>
        <dbReference type="ChEBI" id="CHEBI:58725"/>
        <dbReference type="ChEBI" id="CHEBI:61527"/>
        <dbReference type="EC" id="2.6.1.16"/>
    </reaction>
</comment>
<comment type="biophysicochemical properties">
    <phDependence>
        <text evidence="2">Active from pH 6.5 to 7.8.</text>
    </phDependence>
</comment>
<comment type="subunit">
    <text evidence="2">Homodimer.</text>
</comment>
<comment type="subcellular location">
    <subcellularLocation>
        <location evidence="1">Cytoplasm</location>
    </subcellularLocation>
</comment>
<comment type="sequence caution" evidence="3">
    <conflict type="erroneous initiation">
        <sequence resource="EMBL-CDS" id="CAF31236"/>
    </conflict>
</comment>